<protein>
    <recommendedName>
        <fullName>Killer cell immunoglobulin-like receptor 3DL3</fullName>
    </recommendedName>
    <alternativeName>
        <fullName>CD158 antigen-like family member Z</fullName>
    </alternativeName>
    <alternativeName>
        <fullName>Killer cell inhibitory receptor 1</fullName>
    </alternativeName>
    <cdAntigenName>CD158z</cdAntigenName>
</protein>
<organism evidence="13">
    <name type="scientific">Homo sapiens</name>
    <name type="common">Human</name>
    <dbReference type="NCBI Taxonomy" id="9606"/>
    <lineage>
        <taxon>Eukaryota</taxon>
        <taxon>Metazoa</taxon>
        <taxon>Chordata</taxon>
        <taxon>Craniata</taxon>
        <taxon>Vertebrata</taxon>
        <taxon>Euteleostomi</taxon>
        <taxon>Mammalia</taxon>
        <taxon>Eutheria</taxon>
        <taxon>Euarchontoglires</taxon>
        <taxon>Primates</taxon>
        <taxon>Haplorrhini</taxon>
        <taxon>Catarrhini</taxon>
        <taxon>Hominidae</taxon>
        <taxon>Homo</taxon>
    </lineage>
</organism>
<comment type="function">
    <text evidence="9">Receptor on natural killer cells. May inhibit the activity of NK cells thus preventing cell lysis.</text>
</comment>
<comment type="interaction">
    <interactant intactId="EBI-17272405">
        <id>Q8N743</id>
    </interactant>
    <interactant intactId="EBI-10225815">
        <id>Q08AM2</id>
        <label>ADAM33</label>
    </interactant>
    <organismsDiffer>false</organismsDiffer>
    <experiments>3</experiments>
</comment>
<comment type="interaction">
    <interactant intactId="EBI-17272405">
        <id>Q8N743</id>
    </interactant>
    <interactant intactId="EBI-11522760">
        <id>Q6RW13-2</id>
        <label>AGTRAP</label>
    </interactant>
    <organismsDiffer>false</organismsDiffer>
    <experiments>3</experiments>
</comment>
<comment type="interaction">
    <interactant intactId="EBI-17272405">
        <id>Q8N743</id>
    </interactant>
    <interactant intactId="EBI-79189">
        <id>P78348</id>
        <label>ASIC1</label>
    </interactant>
    <organismsDiffer>false</organismsDiffer>
    <experiments>3</experiments>
</comment>
<comment type="interaction">
    <interactant intactId="EBI-17272405">
        <id>Q8N743</id>
    </interactant>
    <interactant intactId="EBI-8558308">
        <id>P01031</id>
        <label>C5</label>
    </interactant>
    <organismsDiffer>false</organismsDiffer>
    <experiments>3</experiments>
</comment>
<comment type="interaction">
    <interactant intactId="EBI-17272405">
        <id>Q8N743</id>
    </interactant>
    <interactant intactId="EBI-6657396">
        <id>P19397</id>
        <label>CD53</label>
    </interactant>
    <organismsDiffer>false</organismsDiffer>
    <experiments>3</experiments>
</comment>
<comment type="interaction">
    <interactant intactId="EBI-17272405">
        <id>Q8N743</id>
    </interactant>
    <interactant intactId="EBI-11522780">
        <id>Q96DZ9-2</id>
        <label>CMTM5</label>
    </interactant>
    <organismsDiffer>false</organismsDiffer>
    <experiments>3</experiments>
</comment>
<comment type="interaction">
    <interactant intactId="EBI-17272405">
        <id>Q8N743</id>
    </interactant>
    <interactant intactId="EBI-12019274">
        <id>Q4LDR2</id>
        <label>CTXN3</label>
    </interactant>
    <organismsDiffer>false</organismsDiffer>
    <experiments>3</experiments>
</comment>
<comment type="interaction">
    <interactant intactId="EBI-17272405">
        <id>Q8N743</id>
    </interactant>
    <interactant intactId="EBI-10215665">
        <id>P56851</id>
        <label>EDDM3B</label>
    </interactant>
    <organismsDiffer>false</organismsDiffer>
    <experiments>3</experiments>
</comment>
<comment type="interaction">
    <interactant intactId="EBI-17272405">
        <id>Q8N743</id>
    </interactant>
    <interactant intactId="EBI-3907816">
        <id>P54852</id>
        <label>EMP3</label>
    </interactant>
    <organismsDiffer>false</organismsDiffer>
    <experiments>3</experiments>
</comment>
<comment type="interaction">
    <interactant intactId="EBI-17272405">
        <id>Q8N743</id>
    </interactant>
    <interactant intactId="EBI-6166686">
        <id>Q96F15</id>
        <label>GIMAP5</label>
    </interactant>
    <organismsDiffer>false</organismsDiffer>
    <experiments>3</experiments>
</comment>
<comment type="interaction">
    <interactant intactId="EBI-17272405">
        <id>Q8N743</id>
    </interactant>
    <interactant intactId="EBI-10266796">
        <id>Q8N5M9</id>
        <label>JAGN1</label>
    </interactant>
    <organismsDiffer>false</organismsDiffer>
    <experiments>3</experiments>
</comment>
<comment type="interaction">
    <interactant intactId="EBI-17272405">
        <id>Q8N743</id>
    </interactant>
    <interactant intactId="EBI-2865663">
        <id>Q13571</id>
        <label>LAPTM5</label>
    </interactant>
    <organismsDiffer>false</organismsDiffer>
    <experiments>3</experiments>
</comment>
<comment type="interaction">
    <interactant intactId="EBI-17272405">
        <id>Q8N743</id>
    </interactant>
    <interactant intactId="EBI-10317425">
        <id>Q9NZG7</id>
        <label>NINJ2</label>
    </interactant>
    <organismsDiffer>false</organismsDiffer>
    <experiments>3</experiments>
</comment>
<comment type="interaction">
    <interactant intactId="EBI-17272405">
        <id>Q8N743</id>
    </interactant>
    <interactant intactId="EBI-2804156">
        <id>Q6UX06</id>
        <label>OLFM4</label>
    </interactant>
    <organismsDiffer>false</organismsDiffer>
    <experiments>3</experiments>
</comment>
<comment type="interaction">
    <interactant intactId="EBI-17272405">
        <id>Q8N743</id>
    </interactant>
    <interactant intactId="EBI-10329948">
        <id>Q9Y6X1</id>
        <label>SERP1</label>
    </interactant>
    <organismsDiffer>false</organismsDiffer>
    <experiments>3</experiments>
</comment>
<comment type="interaction">
    <interactant intactId="EBI-17272405">
        <id>Q8N743</id>
    </interactant>
    <interactant intactId="EBI-12870360">
        <id>P78382</id>
        <label>SLC35A1</label>
    </interactant>
    <organismsDiffer>false</organismsDiffer>
    <experiments>3</experiments>
</comment>
<comment type="interaction">
    <interactant intactId="EBI-17272405">
        <id>Q8N743</id>
    </interactant>
    <interactant intactId="EBI-10290130">
        <id>Q96JW4</id>
        <label>SLC41A2</label>
    </interactant>
    <organismsDiffer>false</organismsDiffer>
    <experiments>3</experiments>
</comment>
<comment type="interaction">
    <interactant intactId="EBI-17272405">
        <id>Q8N743</id>
    </interactant>
    <interactant intactId="EBI-741850">
        <id>Q9BZL3</id>
        <label>SMIM3</label>
    </interactant>
    <organismsDiffer>false</organismsDiffer>
    <experiments>3</experiments>
</comment>
<comment type="interaction">
    <interactant intactId="EBI-17272405">
        <id>Q8N743</id>
    </interactant>
    <interactant intactId="EBI-13075176">
        <id>Q8N2H4</id>
        <label>SYS1</label>
    </interactant>
    <organismsDiffer>false</organismsDiffer>
    <experiments>3</experiments>
</comment>
<comment type="interaction">
    <interactant intactId="EBI-17272405">
        <id>Q8N743</id>
    </interactant>
    <interactant intactId="EBI-12003398">
        <id>Q9H2S6-2</id>
        <label>TNMD</label>
    </interactant>
    <organismsDiffer>false</organismsDiffer>
    <experiments>3</experiments>
</comment>
<comment type="interaction">
    <interactant intactId="EBI-17272405">
        <id>Q8N743</id>
    </interactant>
    <interactant intactId="EBI-10179682">
        <id>O00526</id>
        <label>UPK2</label>
    </interactant>
    <organismsDiffer>false</organismsDiffer>
    <experiments>3</experiments>
</comment>
<comment type="interaction">
    <interactant intactId="EBI-17272405">
        <id>Q8N743</id>
    </interactant>
    <interactant intactId="EBI-10191195">
        <id>O95183</id>
        <label>VAMP5</label>
    </interactant>
    <organismsDiffer>false</organismsDiffer>
    <experiments>3</experiments>
</comment>
<comment type="subcellular location">
    <subcellularLocation>
        <location>Cell membrane</location>
        <topology>Single-pass type I membrane protein</topology>
    </subcellularLocation>
</comment>
<comment type="polymorphism">
    <text evidence="3 5 6 7">Various different KIR3DL3 alleles are known: KIR3DL3*00101, KIR3DL3*00102, KIR3DL3*00103, KIR3DL3*00201, KIR3DL3*00202, KIR3DL3*00203, KIR3DL3*00204, KIR3DL3*00205, KIR3DL3*00206, KIR3DL3*00207, KIR3DL3*0030101 KIR3DL3*0030102, KIR3DL3*00401, KIR3DL3*00402, KIR3DL3*005, KIR3DL3*00601, KIR3DL3*00602, KIR3DL3*007, KIR3DL3*00801, KIR3DL3*00802, KIR3DL3*00901, KIR3DL3*00902, KIR3DL3*010, KIR3DL3*01101, KIR3DL3*01102, KIR3DL3*012, KIR3DL3*01301, KIR3DL3*01302, KIR3DL3*01303, KIR3DL3*01304, KIR3DL3*01305, KIR3DL3*01306, KIR3DL3*01307, KIR3DL3*01401, KIR3DL3*01402, KIR3DL3*01403, KIR3DL3*01404, KIR3DL3*01405, KIR3DL3*015 KIR3DL3*016, KIR3DL3*017, KIR3DL3*018, KIR3DL3*019, KIR3DL3*020, KIR3DL3*021, KIR3DL3*022, KIR3DL3*023, KIR3DL3*024, KIR3DL3*025, KIR3DL3*026, KIR3DL3*027, KIR3DL3*028, KIR3DL3*029, KIR3DL3*030 and KIR3DL3*031. The sequence shown corresponds to the alleles KIR3DL3*002.</text>
</comment>
<comment type="similarity">
    <text evidence="10">Belongs to the immunoglobulin superfamily.</text>
</comment>
<comment type="online information" name="IPD-KIR Database">
    <link uri="https://www.ebi.ac.uk/cgi-bin/ipd/kir/view_nomenclature.cgi?kir.3dl3"/>
    <text>KIR Allele Nomenclature</text>
</comment>
<sequence length="410" mass="44928">MSLMVVSMACVGFFLLEGPWPHVGGQDKPFLSAWPGTVVSEGQHVTLQCRSRLGFNEFSLSKEDGMPVPELYNRIFRNSFLMGPVTPAHAGTYRCCSSHPHSPTGWSAPSNPVVIMVTGVHRKPSLLAHPGPLVKSGETVILQCWSDVRFERFLLHREGITEDPLRLVGQLHDAGSQVNYSMGPMTPALAGTYRCFGSVTHLPYELSAPSDPLDIVVVGLYGKPSLSAQPGPTVQAGENVTLSCSSRSLFDIYHLSREAEAGELRLTAVLRVNGTFQANFPLGPVTHGGNYRCFGSFRALPHAWSDPSDPLPVSVTGNSRHLHVLIGTSVVIIPFAILLFFLLHRWCANKKNAVVMDQEPAGNRTVNREDSDEQDPQEVTYAQLNHCVFTQRKITRPSQRPKTPPTDTSV</sequence>
<dbReference type="EMBL" id="AF072410">
    <property type="protein sequence ID" value="AAC99763.1"/>
    <property type="molecule type" value="Genomic_DNA"/>
</dbReference>
<dbReference type="EMBL" id="AF072407">
    <property type="protein sequence ID" value="AAC99763.1"/>
    <property type="status" value="JOINED"/>
    <property type="molecule type" value="Genomic_DNA"/>
</dbReference>
<dbReference type="EMBL" id="AF072408">
    <property type="protein sequence ID" value="AAC99763.1"/>
    <property type="status" value="JOINED"/>
    <property type="molecule type" value="Genomic_DNA"/>
</dbReference>
<dbReference type="EMBL" id="AF072409">
    <property type="protein sequence ID" value="AAC99763.1"/>
    <property type="status" value="JOINED"/>
    <property type="molecule type" value="Genomic_DNA"/>
</dbReference>
<dbReference type="EMBL" id="AF352324">
    <property type="protein sequence ID" value="AAK30258.1"/>
    <property type="molecule type" value="mRNA"/>
</dbReference>
<dbReference type="EMBL" id="KU842452">
    <property type="status" value="NOT_ANNOTATED_CDS"/>
    <property type="molecule type" value="Genomic_DNA"/>
</dbReference>
<dbReference type="EMBL" id="AC245128">
    <property type="status" value="NOT_ANNOTATED_CDS"/>
    <property type="molecule type" value="Genomic_DNA"/>
</dbReference>
<dbReference type="EMBL" id="AC006293">
    <property type="protein sequence ID" value="AAD03159.1"/>
    <property type="molecule type" value="Genomic_DNA"/>
</dbReference>
<dbReference type="EMBL" id="AL133414">
    <property type="protein sequence ID" value="CAC40702.1"/>
    <property type="molecule type" value="Genomic_DNA"/>
</dbReference>
<dbReference type="EMBL" id="AY987937">
    <property type="protein sequence ID" value="ABC03227.1"/>
    <property type="molecule type" value="Genomic_DNA"/>
</dbReference>
<dbReference type="EMBL" id="AY987938">
    <property type="protein sequence ID" value="ABC03228.1"/>
    <property type="molecule type" value="Genomic_DNA"/>
</dbReference>
<dbReference type="EMBL" id="AY987939">
    <property type="protein sequence ID" value="ABC03229.1"/>
    <property type="molecule type" value="Genomic_DNA"/>
</dbReference>
<dbReference type="EMBL" id="AY987940">
    <property type="protein sequence ID" value="ABC03230.1"/>
    <property type="molecule type" value="Genomic_DNA"/>
</dbReference>
<dbReference type="EMBL" id="AY987941">
    <property type="protein sequence ID" value="ABC03231.1"/>
    <property type="molecule type" value="Genomic_DNA"/>
</dbReference>
<dbReference type="EMBL" id="AY987942">
    <property type="protein sequence ID" value="ABC03232.1"/>
    <property type="molecule type" value="Genomic_DNA"/>
</dbReference>
<dbReference type="EMBL" id="AY987943">
    <property type="protein sequence ID" value="ABC03233.1"/>
    <property type="molecule type" value="Genomic_DNA"/>
</dbReference>
<dbReference type="EMBL" id="AH015397">
    <property type="protein sequence ID" value="ABC03234.1"/>
    <property type="molecule type" value="Genomic_DNA"/>
</dbReference>
<dbReference type="EMBL" id="AH015396">
    <property type="protein sequence ID" value="ABC03226.1"/>
    <property type="molecule type" value="Genomic_DNA"/>
</dbReference>
<dbReference type="EMBL" id="EF153459">
    <property type="protein sequence ID" value="ABM98078.1"/>
    <property type="molecule type" value="Genomic_DNA"/>
</dbReference>
<dbReference type="EMBL" id="EF153460">
    <property type="protein sequence ID" value="ABM98079.1"/>
    <property type="molecule type" value="Genomic_DNA"/>
</dbReference>
<dbReference type="EMBL" id="EF153461">
    <property type="protein sequence ID" value="ABM98080.1"/>
    <property type="molecule type" value="Genomic_DNA"/>
</dbReference>
<dbReference type="EMBL" id="EF153462">
    <property type="protein sequence ID" value="ABM98081.1"/>
    <property type="molecule type" value="Genomic_DNA"/>
</dbReference>
<dbReference type="EMBL" id="EF153463">
    <property type="protein sequence ID" value="ABM98082.1"/>
    <property type="molecule type" value="Genomic_DNA"/>
</dbReference>
<dbReference type="EMBL" id="EF153464">
    <property type="protein sequence ID" value="ABM98083.1"/>
    <property type="molecule type" value="Genomic_DNA"/>
</dbReference>
<dbReference type="EMBL" id="EF153465">
    <property type="protein sequence ID" value="ABM98084.1"/>
    <property type="molecule type" value="Genomic_DNA"/>
</dbReference>
<dbReference type="EMBL" id="EF153466">
    <property type="protein sequence ID" value="ABM98085.1"/>
    <property type="molecule type" value="Genomic_DNA"/>
</dbReference>
<dbReference type="EMBL" id="EF153467">
    <property type="protein sequence ID" value="ABM98086.1"/>
    <property type="molecule type" value="Genomic_DNA"/>
</dbReference>
<dbReference type="EMBL" id="EF165005">
    <property type="protein sequence ID" value="ABM98087.1"/>
    <property type="molecule type" value="Genomic_DNA"/>
</dbReference>
<dbReference type="EMBL" id="EF165006">
    <property type="protein sequence ID" value="ABM98088.1"/>
    <property type="molecule type" value="Genomic_DNA"/>
</dbReference>
<dbReference type="EMBL" id="EF165007">
    <property type="protein sequence ID" value="ABM98089.1"/>
    <property type="molecule type" value="Genomic_DNA"/>
</dbReference>
<dbReference type="EMBL" id="EF165008">
    <property type="protein sequence ID" value="ABM98090.1"/>
    <property type="molecule type" value="Genomic_DNA"/>
</dbReference>
<dbReference type="EMBL" id="EF165009">
    <property type="protein sequence ID" value="ABM98091.1"/>
    <property type="molecule type" value="Genomic_DNA"/>
</dbReference>
<dbReference type="EMBL" id="EF175456">
    <property type="protein sequence ID" value="ABM98092.1"/>
    <property type="molecule type" value="Genomic_DNA"/>
</dbReference>
<dbReference type="EMBL" id="EF175457">
    <property type="protein sequence ID" value="ABM98093.1"/>
    <property type="molecule type" value="Genomic_DNA"/>
</dbReference>
<dbReference type="EMBL" id="EF175458">
    <property type="protein sequence ID" value="ABM98094.1"/>
    <property type="molecule type" value="Genomic_DNA"/>
</dbReference>
<dbReference type="EMBL" id="EF175459">
    <property type="protein sequence ID" value="ABM98095.1"/>
    <property type="molecule type" value="Genomic_DNA"/>
</dbReference>
<dbReference type="EMBL" id="EF175460">
    <property type="protein sequence ID" value="ABM98096.1"/>
    <property type="molecule type" value="Genomic_DNA"/>
</dbReference>
<dbReference type="EMBL" id="EF379094">
    <property type="protein sequence ID" value="ABM92653.1"/>
    <property type="molecule type" value="Genomic_DNA"/>
</dbReference>
<dbReference type="EMBL" id="EF379095">
    <property type="protein sequence ID" value="ABM92654.1"/>
    <property type="molecule type" value="Genomic_DNA"/>
</dbReference>
<dbReference type="EMBL" id="EF492034">
    <property type="protein sequence ID" value="ABS30929.1"/>
    <property type="molecule type" value="Genomic_DNA"/>
</dbReference>
<dbReference type="EMBL" id="EF492035">
    <property type="protein sequence ID" value="ABS30930.1"/>
    <property type="molecule type" value="Genomic_DNA"/>
</dbReference>
<dbReference type="EMBL" id="EF492036">
    <property type="protein sequence ID" value="ABS30931.1"/>
    <property type="molecule type" value="Genomic_DNA"/>
</dbReference>
<dbReference type="EMBL" id="EF492037">
    <property type="protein sequence ID" value="ABS30932.1"/>
    <property type="molecule type" value="Genomic_DNA"/>
</dbReference>
<dbReference type="EMBL" id="EF492038">
    <property type="protein sequence ID" value="ABS30933.1"/>
    <property type="molecule type" value="Genomic_DNA"/>
</dbReference>
<dbReference type="EMBL" id="EF492039">
    <property type="protein sequence ID" value="ABS30934.1"/>
    <property type="molecule type" value="Genomic_DNA"/>
</dbReference>
<dbReference type="EMBL" id="EF492040">
    <property type="protein sequence ID" value="ABS30935.1"/>
    <property type="molecule type" value="Genomic_DNA"/>
</dbReference>
<dbReference type="EMBL" id="EF492041">
    <property type="protein sequence ID" value="ABS30936.1"/>
    <property type="molecule type" value="Genomic_DNA"/>
</dbReference>
<dbReference type="EMBL" id="EF492042">
    <property type="protein sequence ID" value="ABS30937.1"/>
    <property type="molecule type" value="Genomic_DNA"/>
</dbReference>
<dbReference type="EMBL" id="EF492043">
    <property type="protein sequence ID" value="ABS30938.1"/>
    <property type="molecule type" value="Genomic_DNA"/>
</dbReference>
<dbReference type="EMBL" id="EF492044">
    <property type="protein sequence ID" value="ABS30939.1"/>
    <property type="molecule type" value="Genomic_DNA"/>
</dbReference>
<dbReference type="EMBL" id="AH011562">
    <property type="protein sequence ID" value="AAM00023.1"/>
    <property type="molecule type" value="Genomic_DNA"/>
</dbReference>
<dbReference type="EMBL" id="AY083462">
    <property type="protein sequence ID" value="AAM00024.1"/>
    <property type="molecule type" value="Genomic_DNA"/>
</dbReference>
<dbReference type="CCDS" id="CCDS12903.1"/>
<dbReference type="SMR" id="Q8N743"/>
<dbReference type="BioGRID" id="125444">
    <property type="interactions" value="51"/>
</dbReference>
<dbReference type="FunCoup" id="Q8N743">
    <property type="interactions" value="10"/>
</dbReference>
<dbReference type="IntAct" id="Q8N743">
    <property type="interactions" value="22"/>
</dbReference>
<dbReference type="STRING" id="9606.ENSP00000291860"/>
<dbReference type="GlyCosmos" id="Q8N743">
    <property type="glycosylation" value="3 sites, No reported glycans"/>
</dbReference>
<dbReference type="GlyGen" id="Q8N743">
    <property type="glycosylation" value="5 sites"/>
</dbReference>
<dbReference type="PhosphoSitePlus" id="Q8N743"/>
<dbReference type="BioMuta" id="KIR3DL3"/>
<dbReference type="DMDM" id="269849611"/>
<dbReference type="jPOST" id="Q8N743"/>
<dbReference type="MassIVE" id="Q8N743"/>
<dbReference type="PaxDb" id="9606-ENSP00000291860"/>
<dbReference type="PeptideAtlas" id="Q8N743"/>
<dbReference type="Antibodypedia" id="52727">
    <property type="antibodies" value="119 antibodies from 15 providers"/>
</dbReference>
<dbReference type="DNASU" id="115653"/>
<dbReference type="Ensembl" id="ENST00000613010.1">
    <property type="protein sequence ID" value="ENSP00000482580.1"/>
    <property type="gene ID" value="ENSG00000274639.1"/>
</dbReference>
<dbReference type="Ensembl" id="ENST00000614568.1">
    <property type="protein sequence ID" value="ENSP00000478200.1"/>
    <property type="gene ID" value="ENSG00000276196.1"/>
</dbReference>
<dbReference type="UCSC" id="uc032msg.2">
    <property type="organism name" value="human"/>
</dbReference>
<dbReference type="AGR" id="HGNC:16312"/>
<dbReference type="GeneCards" id="KIR3DL3"/>
<dbReference type="HGNC" id="HGNC:16312">
    <property type="gene designation" value="KIR3DL3"/>
</dbReference>
<dbReference type="MIM" id="610095">
    <property type="type" value="gene"/>
</dbReference>
<dbReference type="neXtProt" id="NX_Q8N743"/>
<dbReference type="PharmGKB" id="PA134887375"/>
<dbReference type="VEuPathDB" id="HostDB:ENSG00000242019"/>
<dbReference type="eggNOG" id="ENOG502RU21">
    <property type="taxonomic scope" value="Eukaryota"/>
</dbReference>
<dbReference type="HOGENOM" id="CLU_021100_2_1_1"/>
<dbReference type="InParanoid" id="Q8N743"/>
<dbReference type="OrthoDB" id="9613897at2759"/>
<dbReference type="PAN-GO" id="Q8N743">
    <property type="GO annotations" value="1 GO annotation based on evolutionary models"/>
</dbReference>
<dbReference type="PhylomeDB" id="Q8N743"/>
<dbReference type="TreeFam" id="TF352669"/>
<dbReference type="PathwayCommons" id="Q8N743"/>
<dbReference type="SignaLink" id="Q8N743"/>
<dbReference type="BioGRID-ORCS" id="115653">
    <property type="hits" value="10 hits in 1134 CRISPR screens"/>
</dbReference>
<dbReference type="GeneWiki" id="KIR3DL3"/>
<dbReference type="GenomeRNAi" id="115653"/>
<dbReference type="Pharos" id="Q8N743">
    <property type="development level" value="Tbio"/>
</dbReference>
<dbReference type="PRO" id="PR:Q8N743"/>
<dbReference type="Proteomes" id="UP000005640">
    <property type="component" value="Unplaced"/>
</dbReference>
<dbReference type="RNAct" id="Q8N743">
    <property type="molecule type" value="protein"/>
</dbReference>
<dbReference type="Bgee" id="ENSG00000242019">
    <property type="expression patterns" value="Expressed in male germ line stem cell (sensu Vertebrata) in testis and 2 other cell types or tissues"/>
</dbReference>
<dbReference type="GO" id="GO:0005886">
    <property type="term" value="C:plasma membrane"/>
    <property type="evidence" value="ECO:0000318"/>
    <property type="project" value="GO_Central"/>
</dbReference>
<dbReference type="GO" id="GO:0002764">
    <property type="term" value="P:immune response-regulating signaling pathway"/>
    <property type="evidence" value="ECO:0000318"/>
    <property type="project" value="GO_Central"/>
</dbReference>
<dbReference type="CDD" id="cd05711">
    <property type="entry name" value="IgC2_D2_LILR_KIR_like"/>
    <property type="match status" value="2"/>
</dbReference>
<dbReference type="FunFam" id="2.60.40.10:FF:000033">
    <property type="entry name" value="Killer cell immunoglobulin-like receptor"/>
    <property type="match status" value="1"/>
</dbReference>
<dbReference type="FunFam" id="2.60.40.10:FF:000049">
    <property type="entry name" value="Leukocyte immunoglobulin-like receptor subfamily B member 1"/>
    <property type="match status" value="2"/>
</dbReference>
<dbReference type="Gene3D" id="2.60.40.10">
    <property type="entry name" value="Immunoglobulins"/>
    <property type="match status" value="3"/>
</dbReference>
<dbReference type="InterPro" id="IPR036179">
    <property type="entry name" value="Ig-like_dom_sf"/>
</dbReference>
<dbReference type="InterPro" id="IPR013783">
    <property type="entry name" value="Ig-like_fold"/>
</dbReference>
<dbReference type="InterPro" id="IPR050412">
    <property type="entry name" value="Ig-like_Receptors_ImmuneReg"/>
</dbReference>
<dbReference type="InterPro" id="IPR003599">
    <property type="entry name" value="Ig_sub"/>
</dbReference>
<dbReference type="InterPro" id="IPR003598">
    <property type="entry name" value="Ig_sub2"/>
</dbReference>
<dbReference type="InterPro" id="IPR013151">
    <property type="entry name" value="Immunoglobulin_dom"/>
</dbReference>
<dbReference type="PANTHER" id="PTHR11738:SF177">
    <property type="entry name" value="KILLER CELL IMMUNOGLOBULIN-LIKE RECEPTOR 3DL3"/>
    <property type="match status" value="1"/>
</dbReference>
<dbReference type="PANTHER" id="PTHR11738">
    <property type="entry name" value="MHC CLASS I NK CELL RECEPTOR"/>
    <property type="match status" value="1"/>
</dbReference>
<dbReference type="Pfam" id="PF00047">
    <property type="entry name" value="ig"/>
    <property type="match status" value="3"/>
</dbReference>
<dbReference type="SMART" id="SM00409">
    <property type="entry name" value="IG"/>
    <property type="match status" value="3"/>
</dbReference>
<dbReference type="SMART" id="SM00408">
    <property type="entry name" value="IGc2"/>
    <property type="match status" value="1"/>
</dbReference>
<dbReference type="SUPFAM" id="SSF48726">
    <property type="entry name" value="Immunoglobulin"/>
    <property type="match status" value="3"/>
</dbReference>
<feature type="signal peptide" evidence="2">
    <location>
        <begin position="1"/>
        <end position="25"/>
    </location>
</feature>
<feature type="chain" id="PRO_0000015091" description="Killer cell immunoglobulin-like receptor 3DL3" evidence="2">
    <location>
        <begin position="26"/>
        <end position="410"/>
    </location>
</feature>
<feature type="topological domain" description="Extracellular" evidence="2">
    <location>
        <begin position="26"/>
        <end position="322"/>
    </location>
</feature>
<feature type="transmembrane region" description="Helical" evidence="2">
    <location>
        <begin position="323"/>
        <end position="343"/>
    </location>
</feature>
<feature type="topological domain" description="Cytoplasmic" evidence="2">
    <location>
        <begin position="344"/>
        <end position="410"/>
    </location>
</feature>
<feature type="domain" description="Ig-like C2-type 1" evidence="10">
    <location>
        <begin position="42"/>
        <end position="97"/>
    </location>
</feature>
<feature type="domain" description="Ig-like C2-type 2" evidence="10">
    <location>
        <begin position="137"/>
        <end position="197"/>
    </location>
</feature>
<feature type="domain" description="Ig-like C2-type 3" evidence="10">
    <location>
        <begin position="237"/>
        <end position="295"/>
    </location>
</feature>
<feature type="glycosylation site" description="N-linked (GlcNAc...) asparagine" evidence="10">
    <location>
        <position position="179"/>
    </location>
</feature>
<feature type="glycosylation site" description="N-linked (GlcNAc...) asparagine" evidence="10">
    <location>
        <position position="239"/>
    </location>
</feature>
<feature type="glycosylation site" description="N-linked (GlcNAc...) asparagine" evidence="10">
    <location>
        <position position="273"/>
    </location>
</feature>
<feature type="disulfide bond" evidence="10">
    <location>
        <begin position="49"/>
        <end position="95"/>
    </location>
</feature>
<feature type="disulfide bond" evidence="1">
    <location>
        <begin position="144"/>
        <end position="195"/>
    </location>
</feature>
<feature type="disulfide bond" evidence="1">
    <location>
        <begin position="244"/>
        <end position="293"/>
    </location>
</feature>
<feature type="sequence variant" id="VAR_060610" description="In allele KIR3DL3*00401, allele KIR3DL3*00402, allele KIR3DL3*00801, allele KIR3DL3*00802 and allele KIR3DL3*026; dbSNP:rs113988102." evidence="3">
    <original>R</original>
    <variation>H</variation>
    <location>
        <position position="52"/>
    </location>
</feature>
<feature type="sequence variant" id="VAR_060611" description="In allele KIR3DL3*00601, allele KIR3DL3*00602, allele KIR3DL3*01501 and allele KIR3DL3*01601; dbSNP:rs2075731.">
    <original>N</original>
    <variation>K</variation>
    <location>
        <position position="56"/>
    </location>
</feature>
<feature type="sequence variant" id="VAR_060612" description="In allele KIR3DL3*010 and allele KIR3DL3*028; dbSNP:rs202170060.">
    <original>R</original>
    <variation>W</variation>
    <location>
        <position position="77"/>
    </location>
</feature>
<feature type="sequence variant" id="VAR_060613" description="In allele KIR3DL3*00601, allele KIR3DL3*00602, allele KIR3DL3*01501 and allele KIR3DL3*01601; dbSNP:rs62132665.">
    <original>R</original>
    <variation>S</variation>
    <location>
        <position position="149"/>
    </location>
</feature>
<feature type="sequence variant" id="VAR_060614" description="In allele KIR3DL3*007, allele KIR3DL3*030 and allele KIR3DL3*031; dbSNP:rs199609975.">
    <original>R</original>
    <variation>H</variation>
    <location>
        <position position="152"/>
    </location>
</feature>
<feature type="sequence variant" id="VAR_019426" description="In allele KIR3DL3*00101, allele KIR3DL3*00102, allele KIR3DL3*00103, allele KIR3DL3*0030101, allele KIR3DL3*00901, allele KIR3DL3*00902, allele KIR3DL3*010 and allele KIR3DL3*028; dbSNP:rs270790." evidence="7">
    <original>V</original>
    <variation>I</variation>
    <location>
        <position position="168"/>
    </location>
</feature>
<feature type="sequence variant" id="VAR_060615" description="In allele KIR3DL3*005; dbSNP:rs112412050.">
    <original>G</original>
    <variation>D</variation>
    <location>
        <position position="231"/>
    </location>
</feature>
<feature type="sequence variant" id="VAR_060616" description="In allele KIR3DL3*00601, allele KIR3DL3*00602, allele KIR3DL3*01101, allele KIR3DL3*01102, allele KIR3DL3*01501, allele KIR3DL3*01601 and allele KIR3DL3*017; dbSNP:rs2302422." evidence="4">
    <original>N</original>
    <variation>T</variation>
    <location>
        <position position="290"/>
    </location>
</feature>
<feature type="sequence variant" id="VAR_060617" description="In allele KIR3DL3*00101, allele KIR3DL3*00102, allele KIR3DL3*00103, allele KIR3DL3*00601, allele KIR3DL3*00602, allele KIR3DL3*01302, allele KIR3DL3*01305, allele KIR3DL3*01306, allele KIR3DL3*01307, allele KIR3DL3*017 and allele KIR3DL3*026; dbSNP:rs602444." evidence="7 8">
    <original>H</original>
    <variation>N</variation>
    <location>
        <position position="321"/>
    </location>
</feature>
<feature type="sequence variant" id="VAR_060618" description="In allele KIR3DL3*00101, allele KIR3DL3*0030101, allele KIR3DL3*00401, allele KIR3DL3*00402, allele KIR3DL3*007, allele KIR3DL3*01404, allele KIR3DL3*01405, allele KIR3DL3*01601 and allele KIR3DL3*028; dbSNP:rs602444." evidence="3">
    <original>H</original>
    <variation>Y</variation>
    <location>
        <position position="321"/>
    </location>
</feature>
<feature type="sequence variant" id="VAR_060366" description="In allele KIR3DL3*0030101, allele KIR3DL3*00401, allele KIR3DL3*00402, allele KIR3DL3*007, allele KIR3DL3*01404, allele KIR3DL3*01405, allele KIR3DL3*01601 and allele KIR3DL3*028; dbSNP:rs662386.">
    <original>V</original>
    <variation>A</variation>
    <location>
        <position position="324"/>
    </location>
</feature>
<feature type="sequence variant" id="VAR_060619" description="In allele KIR3DL3*029; dbSNP:rs662386.">
    <original>V</original>
    <variation>D</variation>
    <location>
        <position position="324"/>
    </location>
</feature>
<feature type="sequence variant" id="VAR_056092" description="In allele KIR3DL3*027, allele KIR3DL3*029 and allele KIR3DL3*031; dbSNP:rs16985907.">
    <original>A</original>
    <variation>P</variation>
    <location>
        <position position="348"/>
    </location>
</feature>
<feature type="sequence variant" id="VAR_060620" description="In allele KIR3DL3*027, allele KIR3DL3*029 and allele KIR3DL3*031; dbSNP:rs28504993.">
    <original>E</original>
    <variation>D</variation>
    <location>
        <position position="373"/>
    </location>
</feature>
<name>KI3L3_HUMAN</name>
<keyword id="KW-1003">Cell membrane</keyword>
<keyword id="KW-1015">Disulfide bond</keyword>
<keyword id="KW-0325">Glycoprotein</keyword>
<keyword id="KW-0393">Immunoglobulin domain</keyword>
<keyword id="KW-0472">Membrane</keyword>
<keyword id="KW-1267">Proteomics identification</keyword>
<keyword id="KW-0675">Receptor</keyword>
<keyword id="KW-1185">Reference proteome</keyword>
<keyword id="KW-0677">Repeat</keyword>
<keyword id="KW-0732">Signal</keyword>
<keyword id="KW-0812">Transmembrane</keyword>
<keyword id="KW-1133">Transmembrane helix</keyword>
<proteinExistence type="evidence at protein level"/>
<accession>Q8N743</accession>
<accession>A0A0B4J1R5</accession>
<accession>A9PL62</accession>
<accession>A9PL64</accession>
<accession>A9PL65</accession>
<accession>A9PL66</accession>
<accession>A9PL67</accession>
<accession>A9PL68</accession>
<accession>A9PZV4</accession>
<accession>A9PZV7</accession>
<accession>A9PZV8</accession>
<accession>A9Q066</accession>
<accession>A9Q0R5</accession>
<accession>A9Q242</accession>
<accession>A9Q250</accession>
<accession>A9Q251</accession>
<accession>O95056</accession>
<accession>Q1X775</accession>
<accession>Q1X777</accession>
<accession>Q1X778</accession>
<accession>Q1X779</accession>
<accession>Q1X780</accession>
<accession>Q1X781</accession>
<accession>Q1X782</accession>
<accession>Q1X783</accession>
<accession>Q7Z7N4</accession>
<accession>Q8NHI2</accession>
<accession>Q8NHI3</accession>
<accession>Q9UEI4</accession>
<gene>
    <name type="primary">KIR3DL3</name>
    <name type="synonym">CD158Z</name>
    <name type="synonym">KIR3DL7</name>
    <name type="synonym">KIRC1</name>
</gene>
<reference evidence="11" key="1">
    <citation type="journal article" date="1998" name="Eur. J. Immunol.">
        <title>Isotypic variation of novel immunoglobulin-like transcript/killer cell inhibitory receptor loci in the leukocyte receptor complex.</title>
        <authorList>
            <person name="Torkar M."/>
            <person name="Norgate Z."/>
            <person name="Colonna M."/>
            <person name="Trowsdale J."/>
            <person name="Wilson M.J."/>
        </authorList>
    </citation>
    <scope>NUCLEOTIDE SEQUENCE [GENOMIC DNA] (ALLELE KIR3DL3*00101)</scope>
    <scope>VARIANTS ILE-168 AND ASN-321</scope>
    <scope>POLYMORPHISM</scope>
</reference>
<reference evidence="10" key="2">
    <citation type="journal article" date="2001" name="Immunol. Rev.">
        <title>Inhibition of natural killer cell activation signals by killer cell immunoglobulin-like receptors (CD158).</title>
        <authorList>
            <person name="Long E.O."/>
            <person name="Barber D.F."/>
            <person name="Burshtyn D.N."/>
            <person name="Faure M."/>
            <person name="Peterson M."/>
            <person name="Rajagopalan S."/>
            <person name="Renard V."/>
            <person name="Sandusky M."/>
            <person name="Stebbins C.C."/>
            <person name="Wagtmann N."/>
            <person name="Watzl C."/>
        </authorList>
    </citation>
    <scope>NUCLEOTIDE SEQUENCE [MRNA] (ALLELE KIR3DL3*00401)</scope>
    <scope>VARIANTS HIS-52 AND TYR-321</scope>
    <scope>POLYMORPHISM</scope>
    <scope>REVIEW</scope>
    <source>
        <tissue evidence="12">Peripheral blood</tissue>
    </source>
</reference>
<reference key="3">
    <citation type="submission" date="2016-06" db="EMBL/GenBank/DDBJ databases">
        <title>Full haplotype sequences of the killer immunoglobulin-like receptor (kir) region in several diverse diploid individuals using single molecule, real-time sequencing.</title>
        <authorList>
            <person name="Roe D."/>
            <person name="Vierra-Green C."/>
            <person name="Pyo C.-W."/>
            <person name="Eng K."/>
            <person name="Hall R."/>
            <person name="Spellman S."/>
            <person name="Ranade S."/>
            <person name="Geraghty D.E."/>
            <person name="Maiers M."/>
        </authorList>
    </citation>
    <scope>NUCLEOTIDE SEQUENCE [GENOMIC DNA]</scope>
    <scope>VARIANT TYR-321</scope>
</reference>
<reference key="4">
    <citation type="journal article" date="2004" name="Nature">
        <title>The DNA sequence and biology of human chromosome 19.</title>
        <authorList>
            <person name="Grimwood J."/>
            <person name="Gordon L.A."/>
            <person name="Olsen A.S."/>
            <person name="Terry A."/>
            <person name="Schmutz J."/>
            <person name="Lamerdin J.E."/>
            <person name="Hellsten U."/>
            <person name="Goodstein D."/>
            <person name="Couronne O."/>
            <person name="Tran-Gyamfi M."/>
            <person name="Aerts A."/>
            <person name="Altherr M."/>
            <person name="Ashworth L."/>
            <person name="Bajorek E."/>
            <person name="Black S."/>
            <person name="Branscomb E."/>
            <person name="Caenepeel S."/>
            <person name="Carrano A.V."/>
            <person name="Caoile C."/>
            <person name="Chan Y.M."/>
            <person name="Christensen M."/>
            <person name="Cleland C.A."/>
            <person name="Copeland A."/>
            <person name="Dalin E."/>
            <person name="Dehal P."/>
            <person name="Denys M."/>
            <person name="Detter J.C."/>
            <person name="Escobar J."/>
            <person name="Flowers D."/>
            <person name="Fotopulos D."/>
            <person name="Garcia C."/>
            <person name="Georgescu A.M."/>
            <person name="Glavina T."/>
            <person name="Gomez M."/>
            <person name="Gonzales E."/>
            <person name="Groza M."/>
            <person name="Hammon N."/>
            <person name="Hawkins T."/>
            <person name="Haydu L."/>
            <person name="Ho I."/>
            <person name="Huang W."/>
            <person name="Israni S."/>
            <person name="Jett J."/>
            <person name="Kadner K."/>
            <person name="Kimball H."/>
            <person name="Kobayashi A."/>
            <person name="Larionov V."/>
            <person name="Leem S.-H."/>
            <person name="Lopez F."/>
            <person name="Lou Y."/>
            <person name="Lowry S."/>
            <person name="Malfatti S."/>
            <person name="Martinez D."/>
            <person name="McCready P.M."/>
            <person name="Medina C."/>
            <person name="Morgan J."/>
            <person name="Nelson K."/>
            <person name="Nolan M."/>
            <person name="Ovcharenko I."/>
            <person name="Pitluck S."/>
            <person name="Pollard M."/>
            <person name="Popkie A.P."/>
            <person name="Predki P."/>
            <person name="Quan G."/>
            <person name="Ramirez L."/>
            <person name="Rash S."/>
            <person name="Retterer J."/>
            <person name="Rodriguez A."/>
            <person name="Rogers S."/>
            <person name="Salamov A."/>
            <person name="Salazar A."/>
            <person name="She X."/>
            <person name="Smith D."/>
            <person name="Slezak T."/>
            <person name="Solovyev V."/>
            <person name="Thayer N."/>
            <person name="Tice H."/>
            <person name="Tsai M."/>
            <person name="Ustaszewska A."/>
            <person name="Vo N."/>
            <person name="Wagner M."/>
            <person name="Wheeler J."/>
            <person name="Wu K."/>
            <person name="Xie G."/>
            <person name="Yang J."/>
            <person name="Dubchak I."/>
            <person name="Furey T.S."/>
            <person name="DeJong P."/>
            <person name="Dickson M."/>
            <person name="Gordon D."/>
            <person name="Eichler E.E."/>
            <person name="Pennacchio L.A."/>
            <person name="Richardson P."/>
            <person name="Stubbs L."/>
            <person name="Rokhsar D.S."/>
            <person name="Myers R.M."/>
            <person name="Rubin E.M."/>
            <person name="Lucas S.M."/>
        </authorList>
    </citation>
    <scope>NUCLEOTIDE SEQUENCE [LARGE SCALE GENOMIC DNA]</scope>
</reference>
<reference key="5">
    <citation type="journal article" date="2006" name="Tissue Antigens">
        <title>KIR3DL3 allelic diversity: six new alleles exhibit both conservative and non-conservative substitutions.</title>
        <authorList>
            <person name="Steiner N.K."/>
            <person name="Hurley C.K."/>
        </authorList>
    </citation>
    <scope>NUCLEOTIDE SEQUENCE [GENOMIC DNA] OF 18-410 (ALLELES KIR3DL3*00101; KIR3DL3*00202; KIR3DL3*0030101; KIR3DL3*00402; KIR3DL3*005; KIR3DL3*00601; KIR3DL3*007; KIR3DL3*00801 AND KIR3DL3*00802)</scope>
    <scope>POLYMORPHISM</scope>
</reference>
<reference key="6">
    <citation type="journal article" date="2007" name="Tissue Antigens">
        <title>Seventeen novel alleles add to the already extensive KIR3DL3 diversity.</title>
        <authorList>
            <person name="Hou L."/>
            <person name="Chen M."/>
            <person name="Steiner N.K."/>
            <person name="Belle I."/>
            <person name="Turino C."/>
            <person name="Ng J."/>
            <person name="Hurley C.K."/>
        </authorList>
    </citation>
    <scope>NUCLEOTIDE SEQUENCE [GENOMIC DNA] OF 18-410 (ALLELES KIR3DL3*00101; KIR3DL3*00102; KIR3DL3*00103; KIR3DL3*00206; KIR3DL3*00207; KIR3DL3*0030101; KIR3DL3*00402; KIR3DL3*005; KIR3DL3*00602; KIR3DL3*007; KIR3DL3*00901; KIR3DL3*00902; KIR3DL3*010; KIR3DL3*01101; KIR3DL3*01102; KIR3DL3*01302; KIR3DL3*01305; KIR3DL3*01306; KIR3DL3*01307; KIR3DL3*01404; KIR3DL3*01405; KIR3DL3*01501; KIR3DL3*01601; KIR3DL3*017; KIR3DL3*026; KIR3DL3*027; KIR3DL3*028; KIR3DL3*029; KIR3DL3*030 AND KIR3DL3*031)</scope>
    <scope>POLYMORPHISM</scope>
</reference>
<reference evidence="10" key="7">
    <citation type="journal article" date="2002" name="Genes Immun.">
        <title>Natural killer immunoglobulin-like receptor (KIR) locus profiles in African and South Asian populations.</title>
        <authorList>
            <person name="Norman P.J."/>
            <person name="Carrington C.V.F."/>
            <person name="Byng M."/>
            <person name="Maxwell L.D."/>
            <person name="Curran M.D."/>
            <person name="Stephens H.A.F."/>
            <person name="Chandanayingyong D."/>
            <person name="Verity D.H."/>
            <person name="Hameed K."/>
            <person name="Ramdath D.D."/>
            <person name="Vaughan R.W."/>
        </authorList>
    </citation>
    <scope>NUCLEOTIDE SEQUENCE [GENOMIC DNA] OF 120-316</scope>
    <scope>VARIANT THR-290</scope>
</reference>
<evidence type="ECO:0000250" key="1">
    <source>
        <dbReference type="UniProtKB" id="Q8NHL6"/>
    </source>
</evidence>
<evidence type="ECO:0000255" key="2"/>
<evidence type="ECO:0000269" key="3">
    <source>
    </source>
</evidence>
<evidence type="ECO:0000269" key="4">
    <source>
    </source>
</evidence>
<evidence type="ECO:0000269" key="5">
    <source>
    </source>
</evidence>
<evidence type="ECO:0000269" key="6">
    <source>
    </source>
</evidence>
<evidence type="ECO:0000269" key="7">
    <source>
    </source>
</evidence>
<evidence type="ECO:0000269" key="8">
    <source ref="3"/>
</evidence>
<evidence type="ECO:0000303" key="9">
    <source>
    </source>
</evidence>
<evidence type="ECO:0000305" key="10"/>
<evidence type="ECO:0000312" key="11">
    <source>
        <dbReference type="EMBL" id="AAC99763.1"/>
    </source>
</evidence>
<evidence type="ECO:0000312" key="12">
    <source>
        <dbReference type="EMBL" id="AAK30258.1"/>
    </source>
</evidence>
<evidence type="ECO:0000312" key="13">
    <source>
        <dbReference type="EMBL" id="CAC40702.1"/>
    </source>
</evidence>